<evidence type="ECO:0000250" key="1">
    <source>
        <dbReference type="UniProtKB" id="Q9C9Z2"/>
    </source>
</evidence>
<evidence type="ECO:0000255" key="2"/>
<evidence type="ECO:0000256" key="3">
    <source>
        <dbReference type="SAM" id="MobiDB-lite"/>
    </source>
</evidence>
<evidence type="ECO:0000269" key="4">
    <source>
    </source>
</evidence>
<evidence type="ECO:0000303" key="5">
    <source>
    </source>
</evidence>
<evidence type="ECO:0000305" key="6"/>
<evidence type="ECO:0000305" key="7">
    <source>
    </source>
</evidence>
<evidence type="ECO:0000312" key="8">
    <source>
        <dbReference type="Araport" id="AT5G22790"/>
    </source>
</evidence>
<evidence type="ECO:0007744" key="9">
    <source>
    </source>
</evidence>
<name>RER1_ARATH</name>
<organism>
    <name type="scientific">Arabidopsis thaliana</name>
    <name type="common">Mouse-ear cress</name>
    <dbReference type="NCBI Taxonomy" id="3702"/>
    <lineage>
        <taxon>Eukaryota</taxon>
        <taxon>Viridiplantae</taxon>
        <taxon>Streptophyta</taxon>
        <taxon>Embryophyta</taxon>
        <taxon>Tracheophyta</taxon>
        <taxon>Spermatophyta</taxon>
        <taxon>Magnoliopsida</taxon>
        <taxon>eudicotyledons</taxon>
        <taxon>Gunneridae</taxon>
        <taxon>Pentapetalae</taxon>
        <taxon>rosids</taxon>
        <taxon>malvids</taxon>
        <taxon>Brassicales</taxon>
        <taxon>Brassicaceae</taxon>
        <taxon>Camelineae</taxon>
        <taxon>Arabidopsis</taxon>
    </lineage>
</organism>
<keyword id="KW-0007">Acetylation</keyword>
<keyword id="KW-0150">Chloroplast</keyword>
<keyword id="KW-0217">Developmental protein</keyword>
<keyword id="KW-0472">Membrane</keyword>
<keyword id="KW-0934">Plastid</keyword>
<keyword id="KW-1185">Reference proteome</keyword>
<keyword id="KW-0809">Transit peptide</keyword>
<keyword id="KW-0812">Transmembrane</keyword>
<keyword id="KW-1133">Transmembrane helix</keyword>
<accession>Q9FGP9</accession>
<feature type="transit peptide" description="Chloroplast" evidence="9">
    <location>
        <begin position="1"/>
        <end position="63"/>
    </location>
</feature>
<feature type="chain" id="PRO_0000433440" description="Protein RETICULATA-RELATED 1, chloroplastic" evidence="2">
    <location>
        <begin position="64"/>
        <end position="433"/>
    </location>
</feature>
<feature type="transmembrane region" description="Helical" evidence="2">
    <location>
        <begin position="249"/>
        <end position="269"/>
    </location>
</feature>
<feature type="transmembrane region" description="Helical" evidence="2">
    <location>
        <begin position="323"/>
        <end position="343"/>
    </location>
</feature>
<feature type="region of interest" description="Disordered" evidence="3">
    <location>
        <begin position="93"/>
        <end position="143"/>
    </location>
</feature>
<feature type="compositionally biased region" description="Acidic residues" evidence="3">
    <location>
        <begin position="93"/>
        <end position="105"/>
    </location>
</feature>
<feature type="compositionally biased region" description="Gly residues" evidence="3">
    <location>
        <begin position="110"/>
        <end position="127"/>
    </location>
</feature>
<feature type="compositionally biased region" description="Acidic residues" evidence="3">
    <location>
        <begin position="128"/>
        <end position="139"/>
    </location>
</feature>
<feature type="modified residue" description="N-acetylvaline" evidence="9">
    <location>
        <position position="64"/>
    </location>
</feature>
<proteinExistence type="evidence at protein level"/>
<dbReference type="EMBL" id="AB025618">
    <property type="protein sequence ID" value="BAB09278.1"/>
    <property type="molecule type" value="Genomic_DNA"/>
</dbReference>
<dbReference type="EMBL" id="CP002688">
    <property type="protein sequence ID" value="AED93076.1"/>
    <property type="molecule type" value="Genomic_DNA"/>
</dbReference>
<dbReference type="EMBL" id="AF367348">
    <property type="protein sequence ID" value="AAK32935.1"/>
    <property type="molecule type" value="mRNA"/>
</dbReference>
<dbReference type="EMBL" id="AY081723">
    <property type="protein sequence ID" value="AAL87376.1"/>
    <property type="molecule type" value="mRNA"/>
</dbReference>
<dbReference type="RefSeq" id="NP_197671.1">
    <property type="nucleotide sequence ID" value="NM_122185.3"/>
</dbReference>
<dbReference type="FunCoup" id="Q9FGP9">
    <property type="interactions" value="613"/>
</dbReference>
<dbReference type="STRING" id="3702.Q9FGP9"/>
<dbReference type="iPTMnet" id="Q9FGP9"/>
<dbReference type="SwissPalm" id="Q9FGP9"/>
<dbReference type="PaxDb" id="3702-AT5G22790.1"/>
<dbReference type="ProteomicsDB" id="236162"/>
<dbReference type="EnsemblPlants" id="AT5G22790.1">
    <property type="protein sequence ID" value="AT5G22790.1"/>
    <property type="gene ID" value="AT5G22790"/>
</dbReference>
<dbReference type="GeneID" id="832342"/>
<dbReference type="Gramene" id="AT5G22790.1">
    <property type="protein sequence ID" value="AT5G22790.1"/>
    <property type="gene ID" value="AT5G22790"/>
</dbReference>
<dbReference type="KEGG" id="ath:AT5G22790"/>
<dbReference type="Araport" id="AT5G22790"/>
<dbReference type="TAIR" id="AT5G22790">
    <property type="gene designation" value="RER1"/>
</dbReference>
<dbReference type="eggNOG" id="ENOG502QPQK">
    <property type="taxonomic scope" value="Eukaryota"/>
</dbReference>
<dbReference type="HOGENOM" id="CLU_036961_1_0_1"/>
<dbReference type="InParanoid" id="Q9FGP9"/>
<dbReference type="OMA" id="LMQHCSM"/>
<dbReference type="OrthoDB" id="205639at2759"/>
<dbReference type="PhylomeDB" id="Q9FGP9"/>
<dbReference type="PRO" id="PR:Q9FGP9"/>
<dbReference type="Proteomes" id="UP000006548">
    <property type="component" value="Chromosome 5"/>
</dbReference>
<dbReference type="ExpressionAtlas" id="Q9FGP9">
    <property type="expression patterns" value="baseline and differential"/>
</dbReference>
<dbReference type="GO" id="GO:0009941">
    <property type="term" value="C:chloroplast envelope"/>
    <property type="evidence" value="ECO:0007005"/>
    <property type="project" value="TAIR"/>
</dbReference>
<dbReference type="GO" id="GO:0009706">
    <property type="term" value="C:chloroplast inner membrane"/>
    <property type="evidence" value="ECO:0007005"/>
    <property type="project" value="TAIR"/>
</dbReference>
<dbReference type="GO" id="GO:0009536">
    <property type="term" value="C:plastid"/>
    <property type="evidence" value="ECO:0007005"/>
    <property type="project" value="TAIR"/>
</dbReference>
<dbReference type="InterPro" id="IPR021825">
    <property type="entry name" value="RETICULATA-related"/>
</dbReference>
<dbReference type="PANTHER" id="PTHR31038">
    <property type="entry name" value="EXPRESSED PROTEIN-RELATED"/>
    <property type="match status" value="1"/>
</dbReference>
<dbReference type="PANTHER" id="PTHR31038:SF18">
    <property type="entry name" value="PROTEIN RETICULATA-RELATED 1, CHLOROPLASTIC"/>
    <property type="match status" value="1"/>
</dbReference>
<dbReference type="Pfam" id="PF11891">
    <property type="entry name" value="RETICULATA-like"/>
    <property type="match status" value="1"/>
</dbReference>
<comment type="function">
    <text evidence="7">May play a role in leaf development.</text>
</comment>
<comment type="subcellular location">
    <subcellularLocation>
        <location evidence="1">Plastid</location>
        <location evidence="1">Chloroplast membrane</location>
        <topology evidence="2">Multi-pass membrane protein</topology>
    </subcellularLocation>
</comment>
<comment type="tissue specificity">
    <text evidence="4">Expressed in root vasculature, distal region of young leaf primordia, leaf bundle sheath cells, hydathodes and pollen grains.</text>
</comment>
<comment type="disruption phenotype">
    <text evidence="4">No visible phenotype under normal growth conditions.</text>
</comment>
<comment type="similarity">
    <text evidence="6">Belongs to the RETICULATA family.</text>
</comment>
<protein>
    <recommendedName>
        <fullName evidence="5">Protein RETICULATA-RELATED 1, chloroplastic</fullName>
    </recommendedName>
</protein>
<gene>
    <name evidence="5" type="primary">RER1</name>
    <name evidence="8" type="ordered locus">At5g22790</name>
</gene>
<reference key="1">
    <citation type="submission" date="1999-04" db="EMBL/GenBank/DDBJ databases">
        <title>Structural analysis of Arabidopsis thaliana chromosome 5. XI.</title>
        <authorList>
            <person name="Kaneko T."/>
            <person name="Katoh T."/>
            <person name="Asamizu E."/>
            <person name="Sato S."/>
            <person name="Nakamura Y."/>
            <person name="Kotani H."/>
            <person name="Tabata S."/>
        </authorList>
    </citation>
    <scope>NUCLEOTIDE SEQUENCE [LARGE SCALE GENOMIC DNA]</scope>
    <source>
        <strain>cv. Columbia</strain>
    </source>
</reference>
<reference key="2">
    <citation type="journal article" date="2017" name="Plant J.">
        <title>Araport11: a complete reannotation of the Arabidopsis thaliana reference genome.</title>
        <authorList>
            <person name="Cheng C.Y."/>
            <person name="Krishnakumar V."/>
            <person name="Chan A.P."/>
            <person name="Thibaud-Nissen F."/>
            <person name="Schobel S."/>
            <person name="Town C.D."/>
        </authorList>
    </citation>
    <scope>GENOME REANNOTATION</scope>
    <source>
        <strain>cv. Columbia</strain>
    </source>
</reference>
<reference key="3">
    <citation type="journal article" date="2003" name="Science">
        <title>Empirical analysis of transcriptional activity in the Arabidopsis genome.</title>
        <authorList>
            <person name="Yamada K."/>
            <person name="Lim J."/>
            <person name="Dale J.M."/>
            <person name="Chen H."/>
            <person name="Shinn P."/>
            <person name="Palm C.J."/>
            <person name="Southwick A.M."/>
            <person name="Wu H.C."/>
            <person name="Kim C.J."/>
            <person name="Nguyen M."/>
            <person name="Pham P.K."/>
            <person name="Cheuk R.F."/>
            <person name="Karlin-Newmann G."/>
            <person name="Liu S.X."/>
            <person name="Lam B."/>
            <person name="Sakano H."/>
            <person name="Wu T."/>
            <person name="Yu G."/>
            <person name="Miranda M."/>
            <person name="Quach H.L."/>
            <person name="Tripp M."/>
            <person name="Chang C.H."/>
            <person name="Lee J.M."/>
            <person name="Toriumi M.J."/>
            <person name="Chan M.M."/>
            <person name="Tang C.C."/>
            <person name="Onodera C.S."/>
            <person name="Deng J.M."/>
            <person name="Akiyama K."/>
            <person name="Ansari Y."/>
            <person name="Arakawa T."/>
            <person name="Banh J."/>
            <person name="Banno F."/>
            <person name="Bowser L."/>
            <person name="Brooks S.Y."/>
            <person name="Carninci P."/>
            <person name="Chao Q."/>
            <person name="Choy N."/>
            <person name="Enju A."/>
            <person name="Goldsmith A.D."/>
            <person name="Gurjal M."/>
            <person name="Hansen N.F."/>
            <person name="Hayashizaki Y."/>
            <person name="Johnson-Hopson C."/>
            <person name="Hsuan V.W."/>
            <person name="Iida K."/>
            <person name="Karnes M."/>
            <person name="Khan S."/>
            <person name="Koesema E."/>
            <person name="Ishida J."/>
            <person name="Jiang P.X."/>
            <person name="Jones T."/>
            <person name="Kawai J."/>
            <person name="Kamiya A."/>
            <person name="Meyers C."/>
            <person name="Nakajima M."/>
            <person name="Narusaka M."/>
            <person name="Seki M."/>
            <person name="Sakurai T."/>
            <person name="Satou M."/>
            <person name="Tamse R."/>
            <person name="Vaysberg M."/>
            <person name="Wallender E.K."/>
            <person name="Wong C."/>
            <person name="Yamamura Y."/>
            <person name="Yuan S."/>
            <person name="Shinozaki K."/>
            <person name="Davis R.W."/>
            <person name="Theologis A."/>
            <person name="Ecker J.R."/>
        </authorList>
    </citation>
    <scope>NUCLEOTIDE SEQUENCE [LARGE SCALE MRNA]</scope>
    <source>
        <strain>cv. Columbia</strain>
    </source>
</reference>
<reference key="4">
    <citation type="journal article" date="2012" name="Mol. Cell. Proteomics">
        <title>Comparative large-scale characterisation of plant vs. mammal proteins reveals similar and idiosyncratic N-alpha acetylation features.</title>
        <authorList>
            <person name="Bienvenut W.V."/>
            <person name="Sumpton D."/>
            <person name="Martinez A."/>
            <person name="Lilla S."/>
            <person name="Espagne C."/>
            <person name="Meinnel T."/>
            <person name="Giglione C."/>
        </authorList>
    </citation>
    <scope>ACETYLATION [LARGE SCALE ANALYSIS] AT VAL-64</scope>
    <scope>CLEAVAGE OF TRANSIT PEPTIDE [LARGE SCALE ANALYSIS] AFTER CYS-63</scope>
    <scope>IDENTIFICATION BY MASS SPECTROMETRY [LARGE SCALE ANALYSIS]</scope>
</reference>
<reference key="5">
    <citation type="journal article" date="2013" name="Plant Physiol.">
        <title>Functional redundancy and divergence within the Arabidopsis RETICULATA-RELATED gene family.</title>
        <authorList>
            <person name="Perez-Perez J.M."/>
            <person name="Esteve-Bruna D."/>
            <person name="Gonzalez-Bayon R."/>
            <person name="Kangasjarvi S."/>
            <person name="Caldana C."/>
            <person name="Hannah M.A."/>
            <person name="Willmitzer L."/>
            <person name="Ponce M.R."/>
            <person name="Micol J.L."/>
        </authorList>
    </citation>
    <scope>FUNCTION</scope>
    <scope>TISSUE SPECIFICITY</scope>
    <scope>GENE FAMILY</scope>
    <scope>NOMENCLATURE</scope>
    <scope>DISRUPTION PHENOTYPE</scope>
</reference>
<sequence>MSISLKISHISSFSNDGFNSVKQCRVSQRFEIRSVCFRRSPGVESRRIHLNSDLSSRNLRNRCVGSDVVTGEISGRSIPDWAYSGVKDETLSDLEPELDDGDGGDENGNNDGGGNGGNGDGGGGGGDGEGDDGEDEADKAEEKEFGPILKFEEVMKETERRGITLPEDMLEAAKSVGIRKLFLLRYLDLQGSVWPLGFLMRSCAMLRNRMLADPSFLFKVGTEVAIDSCCATFAEVQKRGEDFWSEFELYAADLLVGLVVDVALVGLLAPYARIGKPSVASTGLFKDLKRACASLPSSVFEAERPGCKFSVNQRIATFFYKGLLYGSVGFGCGLIGQGIANLIMTAKRSVKKSEEDVPIPPLFESAALWGVFLGLSSNARYQIINGLERVVEGSTAAKRIPVVAMAFTVGVRFANNVYGGMQFVDWAKLSGVQ</sequence>